<accession>A3M983</accession>
<reference key="1">
    <citation type="journal article" date="2007" name="Genes Dev.">
        <title>New insights into Acinetobacter baumannii pathogenesis revealed by high-density pyrosequencing and transposon mutagenesis.</title>
        <authorList>
            <person name="Smith M.G."/>
            <person name="Gianoulis T.A."/>
            <person name="Pukatzki S."/>
            <person name="Mekalanos J.J."/>
            <person name="Ornston L.N."/>
            <person name="Gerstein M."/>
            <person name="Snyder M."/>
        </authorList>
    </citation>
    <scope>NUCLEOTIDE SEQUENCE [LARGE SCALE GENOMIC DNA]</scope>
    <source>
        <strain>ATCC 17978 / DSM 105126 / CIP 53.77 / LMG 1025 / NCDC KC755 / 5377</strain>
    </source>
</reference>
<dbReference type="EMBL" id="CP000521">
    <property type="protein sequence ID" value="ABO13477.2"/>
    <property type="molecule type" value="Genomic_DNA"/>
</dbReference>
<dbReference type="RefSeq" id="WP_001982642.1">
    <property type="nucleotide sequence ID" value="NZ_CP053098.1"/>
</dbReference>
<dbReference type="SMR" id="A3M983"/>
<dbReference type="GeneID" id="92895317"/>
<dbReference type="KEGG" id="acb:A1S_3080"/>
<dbReference type="HOGENOM" id="CLU_044142_4_1_6"/>
<dbReference type="GO" id="GO:0022625">
    <property type="term" value="C:cytosolic large ribosomal subunit"/>
    <property type="evidence" value="ECO:0007669"/>
    <property type="project" value="TreeGrafter"/>
</dbReference>
<dbReference type="GO" id="GO:0019843">
    <property type="term" value="F:rRNA binding"/>
    <property type="evidence" value="ECO:0007669"/>
    <property type="project" value="UniProtKB-UniRule"/>
</dbReference>
<dbReference type="GO" id="GO:0003735">
    <property type="term" value="F:structural constituent of ribosome"/>
    <property type="evidence" value="ECO:0007669"/>
    <property type="project" value="InterPro"/>
</dbReference>
<dbReference type="GO" id="GO:0006412">
    <property type="term" value="P:translation"/>
    <property type="evidence" value="ECO:0007669"/>
    <property type="project" value="UniProtKB-UniRule"/>
</dbReference>
<dbReference type="FunFam" id="2.40.30.10:FF:000004">
    <property type="entry name" value="50S ribosomal protein L3"/>
    <property type="match status" value="1"/>
</dbReference>
<dbReference type="FunFam" id="3.30.160.810:FF:000001">
    <property type="entry name" value="50S ribosomal protein L3"/>
    <property type="match status" value="1"/>
</dbReference>
<dbReference type="Gene3D" id="3.30.160.810">
    <property type="match status" value="1"/>
</dbReference>
<dbReference type="Gene3D" id="2.40.30.10">
    <property type="entry name" value="Translation factors"/>
    <property type="match status" value="1"/>
</dbReference>
<dbReference type="HAMAP" id="MF_01325_B">
    <property type="entry name" value="Ribosomal_uL3_B"/>
    <property type="match status" value="1"/>
</dbReference>
<dbReference type="InterPro" id="IPR000597">
    <property type="entry name" value="Ribosomal_uL3"/>
</dbReference>
<dbReference type="InterPro" id="IPR019927">
    <property type="entry name" value="Ribosomal_uL3_bac/org-type"/>
</dbReference>
<dbReference type="InterPro" id="IPR019926">
    <property type="entry name" value="Ribosomal_uL3_CS"/>
</dbReference>
<dbReference type="InterPro" id="IPR009000">
    <property type="entry name" value="Transl_B-barrel_sf"/>
</dbReference>
<dbReference type="NCBIfam" id="TIGR03625">
    <property type="entry name" value="L3_bact"/>
    <property type="match status" value="1"/>
</dbReference>
<dbReference type="PANTHER" id="PTHR11229">
    <property type="entry name" value="50S RIBOSOMAL PROTEIN L3"/>
    <property type="match status" value="1"/>
</dbReference>
<dbReference type="PANTHER" id="PTHR11229:SF16">
    <property type="entry name" value="LARGE RIBOSOMAL SUBUNIT PROTEIN UL3C"/>
    <property type="match status" value="1"/>
</dbReference>
<dbReference type="Pfam" id="PF00297">
    <property type="entry name" value="Ribosomal_L3"/>
    <property type="match status" value="1"/>
</dbReference>
<dbReference type="SUPFAM" id="SSF50447">
    <property type="entry name" value="Translation proteins"/>
    <property type="match status" value="1"/>
</dbReference>
<dbReference type="PROSITE" id="PS00474">
    <property type="entry name" value="RIBOSOMAL_L3"/>
    <property type="match status" value="1"/>
</dbReference>
<comment type="function">
    <text evidence="1">One of the primary rRNA binding proteins, it binds directly near the 3'-end of the 23S rRNA, where it nucleates assembly of the 50S subunit.</text>
</comment>
<comment type="subunit">
    <text evidence="1">Part of the 50S ribosomal subunit. Forms a cluster with proteins L14 and L19.</text>
</comment>
<comment type="PTM">
    <text evidence="1">Methylated by PrmB.</text>
</comment>
<comment type="similarity">
    <text evidence="1">Belongs to the universal ribosomal protein uL3 family.</text>
</comment>
<organism>
    <name type="scientific">Acinetobacter baumannii (strain ATCC 17978 / DSM 105126 / CIP 53.77 / LMG 1025 / NCDC KC755 / 5377)</name>
    <dbReference type="NCBI Taxonomy" id="400667"/>
    <lineage>
        <taxon>Bacteria</taxon>
        <taxon>Pseudomonadati</taxon>
        <taxon>Pseudomonadota</taxon>
        <taxon>Gammaproteobacteria</taxon>
        <taxon>Moraxellales</taxon>
        <taxon>Moraxellaceae</taxon>
        <taxon>Acinetobacter</taxon>
        <taxon>Acinetobacter calcoaceticus/baumannii complex</taxon>
    </lineage>
</organism>
<gene>
    <name evidence="1" type="primary">rplC</name>
    <name type="ordered locus">A1S_3080</name>
</gene>
<sequence length="212" mass="22480">MAIGLVGRKCGMTRIFTDAGVSVPVTVIEVDPNRITQIKTLETDGYQAVQVTTGERRESRVTNAQKGHFAKAGVAAGRLVKEFRVTEAELEGREVGGTIGVDLFTVGQIVDVTGQSKGKGFQGGVKRWNFRTQDATHGNSVSHRVLGSTGQNQTPGRVFKGKKMAGHLGDERVTVQGLEIVSVDTERSVLVVKGAIPGATGGDVIVRPTIKA</sequence>
<feature type="chain" id="PRO_1000141810" description="Large ribosomal subunit protein uL3">
    <location>
        <begin position="1"/>
        <end position="212"/>
    </location>
</feature>
<feature type="region of interest" description="Disordered" evidence="2">
    <location>
        <begin position="136"/>
        <end position="155"/>
    </location>
</feature>
<feature type="modified residue" description="N5-methylglutamine" evidence="1">
    <location>
        <position position="153"/>
    </location>
</feature>
<evidence type="ECO:0000255" key="1">
    <source>
        <dbReference type="HAMAP-Rule" id="MF_01325"/>
    </source>
</evidence>
<evidence type="ECO:0000256" key="2">
    <source>
        <dbReference type="SAM" id="MobiDB-lite"/>
    </source>
</evidence>
<evidence type="ECO:0000305" key="3"/>
<protein>
    <recommendedName>
        <fullName evidence="1">Large ribosomal subunit protein uL3</fullName>
    </recommendedName>
    <alternativeName>
        <fullName evidence="3">50S ribosomal protein L3</fullName>
    </alternativeName>
</protein>
<proteinExistence type="inferred from homology"/>
<keyword id="KW-0488">Methylation</keyword>
<keyword id="KW-0687">Ribonucleoprotein</keyword>
<keyword id="KW-0689">Ribosomal protein</keyword>
<keyword id="KW-0694">RNA-binding</keyword>
<keyword id="KW-0699">rRNA-binding</keyword>
<name>RL3_ACIBT</name>